<dbReference type="EC" id="3.1.3.48"/>
<dbReference type="EMBL" id="CR382138">
    <property type="protein sequence ID" value="CAG89114.1"/>
    <property type="molecule type" value="Genomic_DNA"/>
</dbReference>
<dbReference type="RefSeq" id="XP_460773.1">
    <property type="nucleotide sequence ID" value="XM_460773.1"/>
</dbReference>
<dbReference type="SMR" id="Q6BLZ8"/>
<dbReference type="FunCoup" id="Q6BLZ8">
    <property type="interactions" value="42"/>
</dbReference>
<dbReference type="STRING" id="284592.Q6BLZ8"/>
<dbReference type="GeneID" id="2903615"/>
<dbReference type="KEGG" id="dha:DEHA2F09482g"/>
<dbReference type="VEuPathDB" id="FungiDB:DEHA2F09482g"/>
<dbReference type="eggNOG" id="KOG1572">
    <property type="taxonomic scope" value="Eukaryota"/>
</dbReference>
<dbReference type="HOGENOM" id="CLU_047845_2_2_1"/>
<dbReference type="InParanoid" id="Q6BLZ8"/>
<dbReference type="OMA" id="PWNPISE"/>
<dbReference type="OrthoDB" id="6375174at2759"/>
<dbReference type="Proteomes" id="UP000000599">
    <property type="component" value="Chromosome F"/>
</dbReference>
<dbReference type="GO" id="GO:0005737">
    <property type="term" value="C:cytoplasm"/>
    <property type="evidence" value="ECO:0007669"/>
    <property type="project" value="UniProtKB-SubCell"/>
</dbReference>
<dbReference type="GO" id="GO:0004725">
    <property type="term" value="F:protein tyrosine phosphatase activity"/>
    <property type="evidence" value="ECO:0007669"/>
    <property type="project" value="UniProtKB-EC"/>
</dbReference>
<dbReference type="GO" id="GO:0034599">
    <property type="term" value="P:cellular response to oxidative stress"/>
    <property type="evidence" value="ECO:0007669"/>
    <property type="project" value="EnsemblFungi"/>
</dbReference>
<dbReference type="CDD" id="cd14531">
    <property type="entry name" value="PFA-DSP_Oca1"/>
    <property type="match status" value="1"/>
</dbReference>
<dbReference type="FunFam" id="3.90.190.10:FF:000035">
    <property type="entry name" value="Tyrosine phosphatase, putative"/>
    <property type="match status" value="1"/>
</dbReference>
<dbReference type="Gene3D" id="3.90.190.10">
    <property type="entry name" value="Protein tyrosine phosphatase superfamily"/>
    <property type="match status" value="1"/>
</dbReference>
<dbReference type="InterPro" id="IPR020428">
    <property type="entry name" value="PFA-DSPs"/>
</dbReference>
<dbReference type="InterPro" id="IPR029021">
    <property type="entry name" value="Prot-tyrosine_phosphatase-like"/>
</dbReference>
<dbReference type="InterPro" id="IPR004861">
    <property type="entry name" value="Siw14-like"/>
</dbReference>
<dbReference type="InterPro" id="IPR020422">
    <property type="entry name" value="TYR_PHOSPHATASE_DUAL_dom"/>
</dbReference>
<dbReference type="PANTHER" id="PTHR31126">
    <property type="entry name" value="TYROSINE-PROTEIN PHOSPHATASE"/>
    <property type="match status" value="1"/>
</dbReference>
<dbReference type="PANTHER" id="PTHR31126:SF8">
    <property type="entry name" value="TYROSINE-PROTEIN PHOSPHATASE OCA1-RELATED"/>
    <property type="match status" value="1"/>
</dbReference>
<dbReference type="Pfam" id="PF03162">
    <property type="entry name" value="Y_phosphatase2"/>
    <property type="match status" value="1"/>
</dbReference>
<dbReference type="PRINTS" id="PR01911">
    <property type="entry name" value="PFDSPHPHTASE"/>
</dbReference>
<dbReference type="SUPFAM" id="SSF52799">
    <property type="entry name" value="(Phosphotyrosine protein) phosphatases II"/>
    <property type="match status" value="1"/>
</dbReference>
<dbReference type="PROSITE" id="PS50054">
    <property type="entry name" value="TYR_PHOSPHATASE_DUAL"/>
    <property type="match status" value="1"/>
</dbReference>
<sequence>MSESQSEIEHNNNNSKLTKISQPPTVRIIPPLNFCPVEKQLYRSGQPSIINQSFLQDLNLKTILWLASEEPQEDFLDYCSMNNIAVEFVGLMNEYSYQNVNPWDALSEDTIKKALELICNKENYPLLVCCGMGRHRTGTVIGCLRRLQGWNLASVSEEYRRFTGSRGGRIMVELLIESFDINSVQIDPTKMPGWLT</sequence>
<gene>
    <name type="primary">OCA1</name>
    <name type="ordered locus">DEHA2F09482g</name>
</gene>
<evidence type="ECO:0000250" key="1"/>
<evidence type="ECO:0000255" key="2">
    <source>
        <dbReference type="PROSITE-ProRule" id="PRU00160"/>
    </source>
</evidence>
<evidence type="ECO:0000305" key="3"/>
<comment type="function">
    <text evidence="1">Putative tyrosine-protein phosphatase required for protection against superoxide stress.</text>
</comment>
<comment type="catalytic activity">
    <reaction>
        <text>O-phospho-L-tyrosyl-[protein] + H2O = L-tyrosyl-[protein] + phosphate</text>
        <dbReference type="Rhea" id="RHEA:10684"/>
        <dbReference type="Rhea" id="RHEA-COMP:10136"/>
        <dbReference type="Rhea" id="RHEA-COMP:20101"/>
        <dbReference type="ChEBI" id="CHEBI:15377"/>
        <dbReference type="ChEBI" id="CHEBI:43474"/>
        <dbReference type="ChEBI" id="CHEBI:46858"/>
        <dbReference type="ChEBI" id="CHEBI:61978"/>
        <dbReference type="EC" id="3.1.3.48"/>
    </reaction>
</comment>
<comment type="subcellular location">
    <subcellularLocation>
        <location evidence="1">Cytoplasm</location>
    </subcellularLocation>
</comment>
<comment type="similarity">
    <text evidence="3">Belongs to the protein-tyrosine phosphatase family.</text>
</comment>
<proteinExistence type="inferred from homology"/>
<accession>Q6BLZ8</accession>
<name>OCA1_DEBHA</name>
<feature type="chain" id="PRO_0000333391" description="Putative tyrosine-protein phosphatase OCA1">
    <location>
        <begin position="1"/>
        <end position="196"/>
    </location>
</feature>
<feature type="domain" description="Tyrosine-protein phosphatase" evidence="2">
    <location>
        <begin position="33"/>
        <end position="192"/>
    </location>
</feature>
<feature type="active site" description="Phosphocysteine intermediate" evidence="2">
    <location>
        <position position="130"/>
    </location>
</feature>
<keyword id="KW-0963">Cytoplasm</keyword>
<keyword id="KW-0378">Hydrolase</keyword>
<keyword id="KW-0904">Protein phosphatase</keyword>
<keyword id="KW-1185">Reference proteome</keyword>
<keyword id="KW-0346">Stress response</keyword>
<protein>
    <recommendedName>
        <fullName>Putative tyrosine-protein phosphatase OCA1</fullName>
        <ecNumber>3.1.3.48</ecNumber>
    </recommendedName>
</protein>
<organism>
    <name type="scientific">Debaryomyces hansenii (strain ATCC 36239 / CBS 767 / BCRC 21394 / JCM 1990 / NBRC 0083 / IGC 2968)</name>
    <name type="common">Yeast</name>
    <name type="synonym">Torulaspora hansenii</name>
    <dbReference type="NCBI Taxonomy" id="284592"/>
    <lineage>
        <taxon>Eukaryota</taxon>
        <taxon>Fungi</taxon>
        <taxon>Dikarya</taxon>
        <taxon>Ascomycota</taxon>
        <taxon>Saccharomycotina</taxon>
        <taxon>Pichiomycetes</taxon>
        <taxon>Debaryomycetaceae</taxon>
        <taxon>Debaryomyces</taxon>
    </lineage>
</organism>
<reference key="1">
    <citation type="journal article" date="2004" name="Nature">
        <title>Genome evolution in yeasts.</title>
        <authorList>
            <person name="Dujon B."/>
            <person name="Sherman D."/>
            <person name="Fischer G."/>
            <person name="Durrens P."/>
            <person name="Casaregola S."/>
            <person name="Lafontaine I."/>
            <person name="de Montigny J."/>
            <person name="Marck C."/>
            <person name="Neuveglise C."/>
            <person name="Talla E."/>
            <person name="Goffard N."/>
            <person name="Frangeul L."/>
            <person name="Aigle M."/>
            <person name="Anthouard V."/>
            <person name="Babour A."/>
            <person name="Barbe V."/>
            <person name="Barnay S."/>
            <person name="Blanchin S."/>
            <person name="Beckerich J.-M."/>
            <person name="Beyne E."/>
            <person name="Bleykasten C."/>
            <person name="Boisrame A."/>
            <person name="Boyer J."/>
            <person name="Cattolico L."/>
            <person name="Confanioleri F."/>
            <person name="de Daruvar A."/>
            <person name="Despons L."/>
            <person name="Fabre E."/>
            <person name="Fairhead C."/>
            <person name="Ferry-Dumazet H."/>
            <person name="Groppi A."/>
            <person name="Hantraye F."/>
            <person name="Hennequin C."/>
            <person name="Jauniaux N."/>
            <person name="Joyet P."/>
            <person name="Kachouri R."/>
            <person name="Kerrest A."/>
            <person name="Koszul R."/>
            <person name="Lemaire M."/>
            <person name="Lesur I."/>
            <person name="Ma L."/>
            <person name="Muller H."/>
            <person name="Nicaud J.-M."/>
            <person name="Nikolski M."/>
            <person name="Oztas S."/>
            <person name="Ozier-Kalogeropoulos O."/>
            <person name="Pellenz S."/>
            <person name="Potier S."/>
            <person name="Richard G.-F."/>
            <person name="Straub M.-L."/>
            <person name="Suleau A."/>
            <person name="Swennen D."/>
            <person name="Tekaia F."/>
            <person name="Wesolowski-Louvel M."/>
            <person name="Westhof E."/>
            <person name="Wirth B."/>
            <person name="Zeniou-Meyer M."/>
            <person name="Zivanovic Y."/>
            <person name="Bolotin-Fukuhara M."/>
            <person name="Thierry A."/>
            <person name="Bouchier C."/>
            <person name="Caudron B."/>
            <person name="Scarpelli C."/>
            <person name="Gaillardin C."/>
            <person name="Weissenbach J."/>
            <person name="Wincker P."/>
            <person name="Souciet J.-L."/>
        </authorList>
    </citation>
    <scope>NUCLEOTIDE SEQUENCE [LARGE SCALE GENOMIC DNA]</scope>
    <source>
        <strain>ATCC 36239 / CBS 767 / BCRC 21394 / JCM 1990 / NBRC 0083 / IGC 2968</strain>
    </source>
</reference>